<sequence length="462" mass="51026">MSKLWGGRFTKTAEQWVDEFGASIGFDQQLVEEDITGSIAHVTMLAKQHILSEEEAAQIKNGLKTLQKKAAAGELVFSAAQEDIHLNLEKLLIDEIGPVGGKLHTGRSRNDQVATDMHLYLRTQTEEIMEAIRTLQAALVKQAEGHVETLIPGYTHLQRAQPVSFAHHLLAYFWMLERDYGRLQDSLKRVNISPLGAGALAGTTFPIDRAYTAELLHFEGIYENSLDAVSDRDFIVEFLAASATLMMHLSRLCEELILWSAQEFQFIEIDDAFATGSSIMPQKKNPDMAELIRGKTGRVYGSLFSLLTTLKGLPLAYNKDMQEDKEGMFDTVKTVKGSLRIFAGMIETITVNTDAMAKAVTSDFSNATELADYLATKGMPFREAHEVVGKLVLTAIEKGVYLLDLPIEVYKEASSLFADDIYEVLQPKTVVGRRNSAGGTGFEQVKLALGKANDLLSQSIKG</sequence>
<gene>
    <name evidence="1" type="primary">argH2</name>
    <name type="ordered locus">ABC2736</name>
</gene>
<protein>
    <recommendedName>
        <fullName evidence="1">Argininosuccinate lyase 2</fullName>
        <shortName evidence="1">ASAL 2</shortName>
        <ecNumber evidence="1">4.3.2.1</ecNumber>
    </recommendedName>
    <alternativeName>
        <fullName evidence="1">Arginosuccinase 2</fullName>
    </alternativeName>
</protein>
<keyword id="KW-0028">Amino-acid biosynthesis</keyword>
<keyword id="KW-0055">Arginine biosynthesis</keyword>
<keyword id="KW-0963">Cytoplasm</keyword>
<keyword id="KW-0456">Lyase</keyword>
<keyword id="KW-1185">Reference proteome</keyword>
<reference key="1">
    <citation type="submission" date="2003-10" db="EMBL/GenBank/DDBJ databases">
        <title>The complete genome sequence of the alkaliphilic Bacillus clausii KSM-K16.</title>
        <authorList>
            <person name="Takaki Y."/>
            <person name="Kageyama Y."/>
            <person name="Shimamura S."/>
            <person name="Suzuki H."/>
            <person name="Nishi S."/>
            <person name="Hatada Y."/>
            <person name="Kawai S."/>
            <person name="Ito S."/>
            <person name="Horikoshi K."/>
        </authorList>
    </citation>
    <scope>NUCLEOTIDE SEQUENCE [LARGE SCALE GENOMIC DNA]</scope>
    <source>
        <strain>KSM-K16</strain>
    </source>
</reference>
<name>ARLY2_SHOC1</name>
<proteinExistence type="inferred from homology"/>
<evidence type="ECO:0000255" key="1">
    <source>
        <dbReference type="HAMAP-Rule" id="MF_00006"/>
    </source>
</evidence>
<comment type="catalytic activity">
    <reaction evidence="1">
        <text>2-(N(omega)-L-arginino)succinate = fumarate + L-arginine</text>
        <dbReference type="Rhea" id="RHEA:24020"/>
        <dbReference type="ChEBI" id="CHEBI:29806"/>
        <dbReference type="ChEBI" id="CHEBI:32682"/>
        <dbReference type="ChEBI" id="CHEBI:57472"/>
        <dbReference type="EC" id="4.3.2.1"/>
    </reaction>
</comment>
<comment type="pathway">
    <text evidence="1">Amino-acid biosynthesis; L-arginine biosynthesis; L-arginine from L-ornithine and carbamoyl phosphate: step 3/3.</text>
</comment>
<comment type="subcellular location">
    <subcellularLocation>
        <location evidence="1">Cytoplasm</location>
    </subcellularLocation>
</comment>
<comment type="similarity">
    <text evidence="1">Belongs to the lyase 1 family. Argininosuccinate lyase subfamily.</text>
</comment>
<accession>Q5WED9</accession>
<feature type="chain" id="PRO_0000240713" description="Argininosuccinate lyase 2">
    <location>
        <begin position="1"/>
        <end position="462"/>
    </location>
</feature>
<dbReference type="EC" id="4.3.2.1" evidence="1"/>
<dbReference type="EMBL" id="AP006627">
    <property type="protein sequence ID" value="BAD65271.1"/>
    <property type="molecule type" value="Genomic_DNA"/>
</dbReference>
<dbReference type="RefSeq" id="WP_011247579.1">
    <property type="nucleotide sequence ID" value="NC_006582.1"/>
</dbReference>
<dbReference type="SMR" id="Q5WED9"/>
<dbReference type="STRING" id="66692.ABC2736"/>
<dbReference type="KEGG" id="bcl:ABC2736"/>
<dbReference type="eggNOG" id="COG0165">
    <property type="taxonomic scope" value="Bacteria"/>
</dbReference>
<dbReference type="HOGENOM" id="CLU_027272_2_3_9"/>
<dbReference type="OrthoDB" id="9769623at2"/>
<dbReference type="UniPathway" id="UPA00068">
    <property type="reaction ID" value="UER00114"/>
</dbReference>
<dbReference type="Proteomes" id="UP000001168">
    <property type="component" value="Chromosome"/>
</dbReference>
<dbReference type="GO" id="GO:0005829">
    <property type="term" value="C:cytosol"/>
    <property type="evidence" value="ECO:0007669"/>
    <property type="project" value="TreeGrafter"/>
</dbReference>
<dbReference type="GO" id="GO:0004056">
    <property type="term" value="F:argininosuccinate lyase activity"/>
    <property type="evidence" value="ECO:0007669"/>
    <property type="project" value="UniProtKB-UniRule"/>
</dbReference>
<dbReference type="GO" id="GO:0042450">
    <property type="term" value="P:arginine biosynthetic process via ornithine"/>
    <property type="evidence" value="ECO:0007669"/>
    <property type="project" value="InterPro"/>
</dbReference>
<dbReference type="GO" id="GO:0006526">
    <property type="term" value="P:L-arginine biosynthetic process"/>
    <property type="evidence" value="ECO:0007669"/>
    <property type="project" value="UniProtKB-UniRule"/>
</dbReference>
<dbReference type="CDD" id="cd01359">
    <property type="entry name" value="Argininosuccinate_lyase"/>
    <property type="match status" value="1"/>
</dbReference>
<dbReference type="FunFam" id="1.10.275.10:FF:000002">
    <property type="entry name" value="Argininosuccinate lyase"/>
    <property type="match status" value="1"/>
</dbReference>
<dbReference type="FunFam" id="1.10.40.30:FF:000001">
    <property type="entry name" value="Argininosuccinate lyase"/>
    <property type="match status" value="1"/>
</dbReference>
<dbReference type="FunFam" id="1.20.200.10:FF:000006">
    <property type="entry name" value="Argininosuccinate lyase"/>
    <property type="match status" value="1"/>
</dbReference>
<dbReference type="Gene3D" id="1.10.40.30">
    <property type="entry name" value="Fumarase/aspartase (C-terminal domain)"/>
    <property type="match status" value="1"/>
</dbReference>
<dbReference type="Gene3D" id="1.20.200.10">
    <property type="entry name" value="Fumarase/aspartase (Central domain)"/>
    <property type="match status" value="1"/>
</dbReference>
<dbReference type="Gene3D" id="1.10.275.10">
    <property type="entry name" value="Fumarase/aspartase (N-terminal domain)"/>
    <property type="match status" value="1"/>
</dbReference>
<dbReference type="HAMAP" id="MF_00006">
    <property type="entry name" value="Arg_succ_lyase"/>
    <property type="match status" value="1"/>
</dbReference>
<dbReference type="InterPro" id="IPR029419">
    <property type="entry name" value="Arg_succ_lyase_C"/>
</dbReference>
<dbReference type="InterPro" id="IPR009049">
    <property type="entry name" value="Argininosuccinate_lyase"/>
</dbReference>
<dbReference type="InterPro" id="IPR024083">
    <property type="entry name" value="Fumarase/histidase_N"/>
</dbReference>
<dbReference type="InterPro" id="IPR020557">
    <property type="entry name" value="Fumarate_lyase_CS"/>
</dbReference>
<dbReference type="InterPro" id="IPR000362">
    <property type="entry name" value="Fumarate_lyase_fam"/>
</dbReference>
<dbReference type="InterPro" id="IPR022761">
    <property type="entry name" value="Fumarate_lyase_N"/>
</dbReference>
<dbReference type="InterPro" id="IPR008948">
    <property type="entry name" value="L-Aspartase-like"/>
</dbReference>
<dbReference type="NCBIfam" id="TIGR00838">
    <property type="entry name" value="argH"/>
    <property type="match status" value="1"/>
</dbReference>
<dbReference type="PANTHER" id="PTHR43814">
    <property type="entry name" value="ARGININOSUCCINATE LYASE"/>
    <property type="match status" value="1"/>
</dbReference>
<dbReference type="PANTHER" id="PTHR43814:SF1">
    <property type="entry name" value="ARGININOSUCCINATE LYASE"/>
    <property type="match status" value="1"/>
</dbReference>
<dbReference type="Pfam" id="PF14698">
    <property type="entry name" value="ASL_C2"/>
    <property type="match status" value="1"/>
</dbReference>
<dbReference type="Pfam" id="PF00206">
    <property type="entry name" value="Lyase_1"/>
    <property type="match status" value="1"/>
</dbReference>
<dbReference type="PRINTS" id="PR00145">
    <property type="entry name" value="ARGSUCLYASE"/>
</dbReference>
<dbReference type="PRINTS" id="PR00149">
    <property type="entry name" value="FUMRATELYASE"/>
</dbReference>
<dbReference type="SUPFAM" id="SSF48557">
    <property type="entry name" value="L-aspartase-like"/>
    <property type="match status" value="1"/>
</dbReference>
<dbReference type="PROSITE" id="PS00163">
    <property type="entry name" value="FUMARATE_LYASES"/>
    <property type="match status" value="1"/>
</dbReference>
<organism>
    <name type="scientific">Shouchella clausii (strain KSM-K16)</name>
    <name type="common">Alkalihalobacillus clausii</name>
    <dbReference type="NCBI Taxonomy" id="66692"/>
    <lineage>
        <taxon>Bacteria</taxon>
        <taxon>Bacillati</taxon>
        <taxon>Bacillota</taxon>
        <taxon>Bacilli</taxon>
        <taxon>Bacillales</taxon>
        <taxon>Bacillaceae</taxon>
        <taxon>Shouchella</taxon>
    </lineage>
</organism>